<organism>
    <name type="scientific">Influenza B virus (strain B/Ann Arbor/1/1966 [cold-adapted])</name>
    <dbReference type="NCBI Taxonomy" id="11522"/>
    <lineage>
        <taxon>Viruses</taxon>
        <taxon>Riboviria</taxon>
        <taxon>Orthornavirae</taxon>
        <taxon>Negarnaviricota</taxon>
        <taxon>Polyploviricotina</taxon>
        <taxon>Insthoviricetes</taxon>
        <taxon>Articulavirales</taxon>
        <taxon>Orthomyxoviridae</taxon>
        <taxon>Betainfluenzavirus</taxon>
        <taxon>Betainfluenzavirus influenzae</taxon>
        <taxon>Influenza B virus</taxon>
    </lineage>
</organism>
<evidence type="ECO:0000255" key="1">
    <source>
        <dbReference type="HAMAP-Rule" id="MF_04066"/>
    </source>
</evidence>
<accession>P69253</accession>
<accession>P13883</accession>
<sequence>MADNMTTTQIEVGPGATNATINFEAGILECYERLSSQRALDYPGQDRLNRLKRKLESRIKTHNKSEPESKRMSLEERKAIGVKMMKVLLFMNPSAGIEGFEPYCMKNSSNSNCPNCNWTDYPPTPGKCLDDIEEEPENVDDPTEIVLRDMNNKDARQKIKEEVNTQKEGKFRLTIKRDIRNVLSLRVLVNGTFLKHPNGYKSLSTLHRLNAYDQSGRLVAKLVATDDLTVEDEEDGHRILNSLFERFNEGHSKPIRAAETAVGVLSQFGQEHRLSPEEGDN</sequence>
<feature type="chain" id="PRO_0000078957" description="Non-structural protein 1">
    <location>
        <begin position="1"/>
        <end position="281"/>
    </location>
</feature>
<feature type="region of interest" description="G1P2-binding">
    <location>
        <begin position="1"/>
        <end position="103"/>
    </location>
</feature>
<feature type="region of interest" description="RNA-binding and homodimerization" evidence="1">
    <location>
        <begin position="1"/>
        <end position="93"/>
    </location>
</feature>
<feature type="short sequence motif" description="Nuclear localization signal" evidence="1">
    <location>
        <begin position="50"/>
        <end position="55"/>
    </location>
</feature>
<dbReference type="EMBL" id="M20224">
    <property type="protein sequence ID" value="AAA43754.1"/>
    <property type="molecule type" value="Genomic_RNA"/>
</dbReference>
<dbReference type="SMR" id="P69253"/>
<dbReference type="GO" id="GO:0030430">
    <property type="term" value="C:host cell cytoplasm"/>
    <property type="evidence" value="ECO:0007669"/>
    <property type="project" value="UniProtKB-SubCell"/>
</dbReference>
<dbReference type="GO" id="GO:0042025">
    <property type="term" value="C:host cell nucleus"/>
    <property type="evidence" value="ECO:0007669"/>
    <property type="project" value="UniProtKB-SubCell"/>
</dbReference>
<dbReference type="GO" id="GO:0030291">
    <property type="term" value="F:protein serine/threonine kinase inhibitor activity"/>
    <property type="evidence" value="ECO:0007669"/>
    <property type="project" value="UniProtKB-KW"/>
</dbReference>
<dbReference type="GO" id="GO:0003723">
    <property type="term" value="F:RNA binding"/>
    <property type="evidence" value="ECO:0007669"/>
    <property type="project" value="UniProtKB-KW"/>
</dbReference>
<dbReference type="GO" id="GO:0039579">
    <property type="term" value="P:symbiont-mediated suppression of host ISG15-protein conjugation"/>
    <property type="evidence" value="ECO:0007669"/>
    <property type="project" value="UniProtKB-KW"/>
</dbReference>
<dbReference type="GO" id="GO:0039580">
    <property type="term" value="P:symbiont-mediated suppression of host PKR/eIFalpha signaling"/>
    <property type="evidence" value="ECO:0007669"/>
    <property type="project" value="UniProtKB-KW"/>
</dbReference>
<dbReference type="GO" id="GO:0039502">
    <property type="term" value="P:symbiont-mediated suppression of host type I interferon-mediated signaling pathway"/>
    <property type="evidence" value="ECO:0007669"/>
    <property type="project" value="UniProtKB-KW"/>
</dbReference>
<dbReference type="Gene3D" id="1.10.287.10">
    <property type="entry name" value="S15/NS1, RNA-binding"/>
    <property type="match status" value="1"/>
</dbReference>
<dbReference type="HAMAP" id="MF_04066">
    <property type="entry name" value="INFV_NS1"/>
    <property type="match status" value="1"/>
</dbReference>
<dbReference type="InterPro" id="IPR004208">
    <property type="entry name" value="NS1"/>
</dbReference>
<dbReference type="InterPro" id="IPR009068">
    <property type="entry name" value="uS15_NS1_RNA-bd_sf"/>
</dbReference>
<dbReference type="Pfam" id="PF02942">
    <property type="entry name" value="Flu_B_NS1"/>
    <property type="match status" value="1"/>
</dbReference>
<dbReference type="PIRSF" id="PIRSF003938">
    <property type="entry name" value="Flu_B_NS1"/>
    <property type="match status" value="1"/>
</dbReference>
<dbReference type="SUPFAM" id="SSF47060">
    <property type="entry name" value="S15/NS1 RNA-binding domain"/>
    <property type="match status" value="1"/>
</dbReference>
<gene>
    <name evidence="1" type="primary">NS</name>
</gene>
<organismHost>
    <name type="scientific">Homo sapiens</name>
    <name type="common">Human</name>
    <dbReference type="NCBI Taxonomy" id="9606"/>
</organismHost>
<keyword id="KW-0025">Alternative splicing</keyword>
<keyword id="KW-1035">Host cytoplasm</keyword>
<keyword id="KW-1048">Host nucleus</keyword>
<keyword id="KW-0945">Host-virus interaction</keyword>
<keyword id="KW-1090">Inhibition of host innate immune response by virus</keyword>
<keyword id="KW-1114">Inhibition of host interferon signaling pathway by virus</keyword>
<keyword id="KW-1095">Inhibition of host ISG15 by virus</keyword>
<keyword id="KW-1102">Inhibition of host PKR by virus</keyword>
<keyword id="KW-0922">Interferon antiviral system evasion</keyword>
<keyword id="KW-0694">RNA-binding</keyword>
<keyword id="KW-0899">Viral immunoevasion</keyword>
<protein>
    <recommendedName>
        <fullName evidence="1">Non-structural protein 1</fullName>
        <shortName evidence="1">NS1</shortName>
    </recommendedName>
    <alternativeName>
        <fullName evidence="1">NS1A</fullName>
    </alternativeName>
</protein>
<comment type="function">
    <text evidence="1">Binds and inhibits the conjugation of the ubiquitin-like G1P2/ISG15 protein to its target proteins. Since G1P2/ISG15 is an early antiviral protein, NS1 may inhibit the host antiviral response. Prevents EIF2AK2/PKR activation, either by binding double strand RNA or by interacting directly with EIF2AK2/PKR. Also binds poly(A) and U6 snRNA.</text>
</comment>
<comment type="subunit">
    <text evidence="1">Homodimer. Interacts with and inhibits human G1P2 conjugation by UBE1L.</text>
</comment>
<comment type="subcellular location">
    <subcellularLocation>
        <location evidence="1">Host cytoplasm</location>
    </subcellularLocation>
    <subcellularLocation>
        <location evidence="1">Host nucleus</location>
    </subcellularLocation>
</comment>
<comment type="alternative products">
    <event type="alternative splicing"/>
    <isoform>
        <id>P69253-1</id>
        <name>NS1</name>
        <sequence type="displayed"/>
    </isoform>
    <isoform>
        <id>P69253-2</id>
        <name>NEP</name>
        <name>NS2</name>
        <sequence type="not described"/>
    </isoform>
</comment>
<comment type="similarity">
    <text evidence="1">Belongs to the influenza B viruses NS1 family.</text>
</comment>
<reference key="1">
    <citation type="journal article" date="1988" name="Virology">
        <title>Sequence comparison of wild-type and cold-adapted B/Ann Arbor/1/66 influenza virus genes.</title>
        <authorList>
            <person name="Deborde D.C."/>
            <person name="Donabedian A.M."/>
            <person name="Herlocher M.L."/>
            <person name="Naeve C.W."/>
            <person name="Maassab H.F."/>
        </authorList>
    </citation>
    <scope>NUCLEOTIDE SEQUENCE [GENOMIC RNA]</scope>
</reference>
<reference key="2">
    <citation type="journal article" date="2003" name="Virology">
        <title>Intracellular warfare between human influenza viruses and human cells: the roles of the viral NS1 protein.</title>
        <authorList>
            <person name="Krug R.M."/>
            <person name="Yuan W."/>
            <person name="Noah D.L."/>
            <person name="Latham A.G."/>
        </authorList>
    </citation>
    <scope>REVIEW</scope>
</reference>
<proteinExistence type="inferred from homology"/>
<name>NS1_INBAC</name>